<name>MORN5_MOUSE</name>
<keyword id="KW-0966">Cell projection</keyword>
<keyword id="KW-0969">Cilium</keyword>
<keyword id="KW-0282">Flagellum</keyword>
<keyword id="KW-1185">Reference proteome</keyword>
<keyword id="KW-0677">Repeat</keyword>
<gene>
    <name type="primary">Morn5</name>
</gene>
<organism>
    <name type="scientific">Mus musculus</name>
    <name type="common">Mouse</name>
    <dbReference type="NCBI Taxonomy" id="10090"/>
    <lineage>
        <taxon>Eukaryota</taxon>
        <taxon>Metazoa</taxon>
        <taxon>Chordata</taxon>
        <taxon>Craniata</taxon>
        <taxon>Vertebrata</taxon>
        <taxon>Euteleostomi</taxon>
        <taxon>Mammalia</taxon>
        <taxon>Eutheria</taxon>
        <taxon>Euarchontoglires</taxon>
        <taxon>Glires</taxon>
        <taxon>Rodentia</taxon>
        <taxon>Myomorpha</taxon>
        <taxon>Muroidea</taxon>
        <taxon>Muridae</taxon>
        <taxon>Murinae</taxon>
        <taxon>Mus</taxon>
        <taxon>Mus</taxon>
    </lineage>
</organism>
<reference key="1">
    <citation type="journal article" date="2005" name="Science">
        <title>The transcriptional landscape of the mammalian genome.</title>
        <authorList>
            <person name="Carninci P."/>
            <person name="Kasukawa T."/>
            <person name="Katayama S."/>
            <person name="Gough J."/>
            <person name="Frith M.C."/>
            <person name="Maeda N."/>
            <person name="Oyama R."/>
            <person name="Ravasi T."/>
            <person name="Lenhard B."/>
            <person name="Wells C."/>
            <person name="Kodzius R."/>
            <person name="Shimokawa K."/>
            <person name="Bajic V.B."/>
            <person name="Brenner S.E."/>
            <person name="Batalov S."/>
            <person name="Forrest A.R."/>
            <person name="Zavolan M."/>
            <person name="Davis M.J."/>
            <person name="Wilming L.G."/>
            <person name="Aidinis V."/>
            <person name="Allen J.E."/>
            <person name="Ambesi-Impiombato A."/>
            <person name="Apweiler R."/>
            <person name="Aturaliya R.N."/>
            <person name="Bailey T.L."/>
            <person name="Bansal M."/>
            <person name="Baxter L."/>
            <person name="Beisel K.W."/>
            <person name="Bersano T."/>
            <person name="Bono H."/>
            <person name="Chalk A.M."/>
            <person name="Chiu K.P."/>
            <person name="Choudhary V."/>
            <person name="Christoffels A."/>
            <person name="Clutterbuck D.R."/>
            <person name="Crowe M.L."/>
            <person name="Dalla E."/>
            <person name="Dalrymple B.P."/>
            <person name="de Bono B."/>
            <person name="Della Gatta G."/>
            <person name="di Bernardo D."/>
            <person name="Down T."/>
            <person name="Engstrom P."/>
            <person name="Fagiolini M."/>
            <person name="Faulkner G."/>
            <person name="Fletcher C.F."/>
            <person name="Fukushima T."/>
            <person name="Furuno M."/>
            <person name="Futaki S."/>
            <person name="Gariboldi M."/>
            <person name="Georgii-Hemming P."/>
            <person name="Gingeras T.R."/>
            <person name="Gojobori T."/>
            <person name="Green R.E."/>
            <person name="Gustincich S."/>
            <person name="Harbers M."/>
            <person name="Hayashi Y."/>
            <person name="Hensch T.K."/>
            <person name="Hirokawa N."/>
            <person name="Hill D."/>
            <person name="Huminiecki L."/>
            <person name="Iacono M."/>
            <person name="Ikeo K."/>
            <person name="Iwama A."/>
            <person name="Ishikawa T."/>
            <person name="Jakt M."/>
            <person name="Kanapin A."/>
            <person name="Katoh M."/>
            <person name="Kawasawa Y."/>
            <person name="Kelso J."/>
            <person name="Kitamura H."/>
            <person name="Kitano H."/>
            <person name="Kollias G."/>
            <person name="Krishnan S.P."/>
            <person name="Kruger A."/>
            <person name="Kummerfeld S.K."/>
            <person name="Kurochkin I.V."/>
            <person name="Lareau L.F."/>
            <person name="Lazarevic D."/>
            <person name="Lipovich L."/>
            <person name="Liu J."/>
            <person name="Liuni S."/>
            <person name="McWilliam S."/>
            <person name="Madan Babu M."/>
            <person name="Madera M."/>
            <person name="Marchionni L."/>
            <person name="Matsuda H."/>
            <person name="Matsuzawa S."/>
            <person name="Miki H."/>
            <person name="Mignone F."/>
            <person name="Miyake S."/>
            <person name="Morris K."/>
            <person name="Mottagui-Tabar S."/>
            <person name="Mulder N."/>
            <person name="Nakano N."/>
            <person name="Nakauchi H."/>
            <person name="Ng P."/>
            <person name="Nilsson R."/>
            <person name="Nishiguchi S."/>
            <person name="Nishikawa S."/>
            <person name="Nori F."/>
            <person name="Ohara O."/>
            <person name="Okazaki Y."/>
            <person name="Orlando V."/>
            <person name="Pang K.C."/>
            <person name="Pavan W.J."/>
            <person name="Pavesi G."/>
            <person name="Pesole G."/>
            <person name="Petrovsky N."/>
            <person name="Piazza S."/>
            <person name="Reed J."/>
            <person name="Reid J.F."/>
            <person name="Ring B.Z."/>
            <person name="Ringwald M."/>
            <person name="Rost B."/>
            <person name="Ruan Y."/>
            <person name="Salzberg S.L."/>
            <person name="Sandelin A."/>
            <person name="Schneider C."/>
            <person name="Schoenbach C."/>
            <person name="Sekiguchi K."/>
            <person name="Semple C.A."/>
            <person name="Seno S."/>
            <person name="Sessa L."/>
            <person name="Sheng Y."/>
            <person name="Shibata Y."/>
            <person name="Shimada H."/>
            <person name="Shimada K."/>
            <person name="Silva D."/>
            <person name="Sinclair B."/>
            <person name="Sperling S."/>
            <person name="Stupka E."/>
            <person name="Sugiura K."/>
            <person name="Sultana R."/>
            <person name="Takenaka Y."/>
            <person name="Taki K."/>
            <person name="Tammoja K."/>
            <person name="Tan S.L."/>
            <person name="Tang S."/>
            <person name="Taylor M.S."/>
            <person name="Tegner J."/>
            <person name="Teichmann S.A."/>
            <person name="Ueda H.R."/>
            <person name="van Nimwegen E."/>
            <person name="Verardo R."/>
            <person name="Wei C.L."/>
            <person name="Yagi K."/>
            <person name="Yamanishi H."/>
            <person name="Zabarovsky E."/>
            <person name="Zhu S."/>
            <person name="Zimmer A."/>
            <person name="Hide W."/>
            <person name="Bult C."/>
            <person name="Grimmond S.M."/>
            <person name="Teasdale R.D."/>
            <person name="Liu E.T."/>
            <person name="Brusic V."/>
            <person name="Quackenbush J."/>
            <person name="Wahlestedt C."/>
            <person name="Mattick J.S."/>
            <person name="Hume D.A."/>
            <person name="Kai C."/>
            <person name="Sasaki D."/>
            <person name="Tomaru Y."/>
            <person name="Fukuda S."/>
            <person name="Kanamori-Katayama M."/>
            <person name="Suzuki M."/>
            <person name="Aoki J."/>
            <person name="Arakawa T."/>
            <person name="Iida J."/>
            <person name="Imamura K."/>
            <person name="Itoh M."/>
            <person name="Kato T."/>
            <person name="Kawaji H."/>
            <person name="Kawagashira N."/>
            <person name="Kawashima T."/>
            <person name="Kojima M."/>
            <person name="Kondo S."/>
            <person name="Konno H."/>
            <person name="Nakano K."/>
            <person name="Ninomiya N."/>
            <person name="Nishio T."/>
            <person name="Okada M."/>
            <person name="Plessy C."/>
            <person name="Shibata K."/>
            <person name="Shiraki T."/>
            <person name="Suzuki S."/>
            <person name="Tagami M."/>
            <person name="Waki K."/>
            <person name="Watahiki A."/>
            <person name="Okamura-Oho Y."/>
            <person name="Suzuki H."/>
            <person name="Kawai J."/>
            <person name="Hayashizaki Y."/>
        </authorList>
    </citation>
    <scope>NUCLEOTIDE SEQUENCE [LARGE SCALE MRNA]</scope>
    <source>
        <strain>C57BL/6J</strain>
        <tissue>Testis</tissue>
    </source>
</reference>
<reference key="2">
    <citation type="journal article" date="2009" name="PLoS Biol.">
        <title>Lineage-specific biology revealed by a finished genome assembly of the mouse.</title>
        <authorList>
            <person name="Church D.M."/>
            <person name="Goodstadt L."/>
            <person name="Hillier L.W."/>
            <person name="Zody M.C."/>
            <person name="Goldstein S."/>
            <person name="She X."/>
            <person name="Bult C.J."/>
            <person name="Agarwala R."/>
            <person name="Cherry J.L."/>
            <person name="DiCuccio M."/>
            <person name="Hlavina W."/>
            <person name="Kapustin Y."/>
            <person name="Meric P."/>
            <person name="Maglott D."/>
            <person name="Birtle Z."/>
            <person name="Marques A.C."/>
            <person name="Graves T."/>
            <person name="Zhou S."/>
            <person name="Teague B."/>
            <person name="Potamousis K."/>
            <person name="Churas C."/>
            <person name="Place M."/>
            <person name="Herschleb J."/>
            <person name="Runnheim R."/>
            <person name="Forrest D."/>
            <person name="Amos-Landgraf J."/>
            <person name="Schwartz D.C."/>
            <person name="Cheng Z."/>
            <person name="Lindblad-Toh K."/>
            <person name="Eichler E.E."/>
            <person name="Ponting C.P."/>
        </authorList>
    </citation>
    <scope>NUCLEOTIDE SEQUENCE [LARGE SCALE GENOMIC DNA]</scope>
    <source>
        <strain>C57BL/6J</strain>
    </source>
</reference>
<reference key="3">
    <citation type="journal article" date="2004" name="Genome Res.">
        <title>The status, quality, and expansion of the NIH full-length cDNA project: the Mammalian Gene Collection (MGC).</title>
        <authorList>
            <consortium name="The MGC Project Team"/>
        </authorList>
    </citation>
    <scope>NUCLEOTIDE SEQUENCE [LARGE SCALE MRNA]</scope>
    <source>
        <tissue>Eye</tissue>
        <tissue>Testis</tissue>
    </source>
</reference>
<reference key="4">
    <citation type="journal article" date="2017" name="PLoS ONE">
        <title>Expression of uncharacterized male germ cell-specific genes and discovery of novel sperm-tail proteins in mice.</title>
        <authorList>
            <person name="Kwon J.T."/>
            <person name="Ham S."/>
            <person name="Jeon S."/>
            <person name="Kim Y."/>
            <person name="Oh S."/>
            <person name="Cho C."/>
        </authorList>
    </citation>
    <scope>SUBCELLULAR LOCATION</scope>
    <scope>TISSUE SPECIFICITY</scope>
    <scope>DEVELOPMENTAL STAGE</scope>
</reference>
<proteinExistence type="evidence at protein level"/>
<feature type="chain" id="PRO_0000292841" description="MORN repeat-containing protein 5">
    <location>
        <begin position="1"/>
        <end position="170"/>
    </location>
</feature>
<feature type="repeat" description="MORN 1">
    <location>
        <begin position="8"/>
        <end position="30"/>
    </location>
</feature>
<feature type="repeat" description="MORN 2">
    <location>
        <begin position="31"/>
        <end position="53"/>
    </location>
</feature>
<feature type="repeat" description="MORN 3">
    <location>
        <begin position="54"/>
        <end position="75"/>
    </location>
</feature>
<protein>
    <recommendedName>
        <fullName>MORN repeat-containing protein 5</fullName>
    </recommendedName>
</protein>
<comment type="subcellular location">
    <subcellularLocation>
        <location evidence="1">Cell projection</location>
        <location evidence="1">Cilium</location>
        <location evidence="1">Flagellum</location>
    </subcellularLocation>
</comment>
<comment type="tissue specificity">
    <text evidence="1">Only detected in testis (at protein level).</text>
</comment>
<comment type="developmental stage">
    <text evidence="1">Detected in testis at 21 days after birth and expression is maintained (PubMed:28742876). Expressed in mature sperm (PubMed:28742876).</text>
</comment>
<dbReference type="EMBL" id="AK005808">
    <property type="protein sequence ID" value="BAB24248.1"/>
    <property type="molecule type" value="mRNA"/>
</dbReference>
<dbReference type="EMBL" id="AL773525">
    <property type="status" value="NOT_ANNOTATED_CDS"/>
    <property type="molecule type" value="Genomic_DNA"/>
</dbReference>
<dbReference type="EMBL" id="BC036965">
    <property type="protein sequence ID" value="AAH36965.1"/>
    <property type="molecule type" value="mRNA"/>
</dbReference>
<dbReference type="EMBL" id="BC048673">
    <property type="protein sequence ID" value="AAH48673.1"/>
    <property type="molecule type" value="mRNA"/>
</dbReference>
<dbReference type="CCDS" id="CCDS15968.1"/>
<dbReference type="RefSeq" id="NP_083585.1">
    <property type="nucleotide sequence ID" value="NM_029309.2"/>
</dbReference>
<dbReference type="SMR" id="Q9DAI9"/>
<dbReference type="FunCoup" id="Q9DAI9">
    <property type="interactions" value="9"/>
</dbReference>
<dbReference type="STRING" id="10090.ENSMUSP00000028256"/>
<dbReference type="iPTMnet" id="Q9DAI9"/>
<dbReference type="PhosphoSitePlus" id="Q9DAI9"/>
<dbReference type="PaxDb" id="10090-ENSMUSP00000028256"/>
<dbReference type="ProteomicsDB" id="291383"/>
<dbReference type="Antibodypedia" id="16056">
    <property type="antibodies" value="66 antibodies from 14 providers"/>
</dbReference>
<dbReference type="DNASU" id="75495"/>
<dbReference type="Ensembl" id="ENSMUST00000028256.5">
    <property type="protein sequence ID" value="ENSMUSP00000028256.5"/>
    <property type="gene ID" value="ENSMUSG00000026894.5"/>
</dbReference>
<dbReference type="GeneID" id="75495"/>
<dbReference type="KEGG" id="mmu:75495"/>
<dbReference type="UCSC" id="uc008jlc.1">
    <property type="organism name" value="mouse"/>
</dbReference>
<dbReference type="AGR" id="MGI:1922745"/>
<dbReference type="CTD" id="254956"/>
<dbReference type="MGI" id="MGI:1922745">
    <property type="gene designation" value="Morn5"/>
</dbReference>
<dbReference type="VEuPathDB" id="HostDB:ENSMUSG00000026894"/>
<dbReference type="eggNOG" id="KOG0231">
    <property type="taxonomic scope" value="Eukaryota"/>
</dbReference>
<dbReference type="GeneTree" id="ENSGT00390000018089"/>
<dbReference type="HOGENOM" id="CLU_117237_0_0_1"/>
<dbReference type="InParanoid" id="Q9DAI9"/>
<dbReference type="OMA" id="NGRMEGK"/>
<dbReference type="OrthoDB" id="300500at2759"/>
<dbReference type="PhylomeDB" id="Q9DAI9"/>
<dbReference type="TreeFam" id="TF327409"/>
<dbReference type="BioGRID-ORCS" id="75495">
    <property type="hits" value="3 hits in 76 CRISPR screens"/>
</dbReference>
<dbReference type="ChiTaRS" id="Morn5">
    <property type="organism name" value="mouse"/>
</dbReference>
<dbReference type="PRO" id="PR:Q9DAI9"/>
<dbReference type="Proteomes" id="UP000000589">
    <property type="component" value="Chromosome 2"/>
</dbReference>
<dbReference type="RNAct" id="Q9DAI9">
    <property type="molecule type" value="protein"/>
</dbReference>
<dbReference type="Bgee" id="ENSMUSG00000026894">
    <property type="expression patterns" value="Expressed in seminiferous tubule of testis and 43 other cell types or tissues"/>
</dbReference>
<dbReference type="GO" id="GO:0036126">
    <property type="term" value="C:sperm flagellum"/>
    <property type="evidence" value="ECO:0000314"/>
    <property type="project" value="UniProtKB"/>
</dbReference>
<dbReference type="Gene3D" id="2.20.110.10">
    <property type="entry name" value="Histone H3 K4-specific methyltransferase SET7/9 N-terminal domain"/>
    <property type="match status" value="1"/>
</dbReference>
<dbReference type="InterPro" id="IPR003409">
    <property type="entry name" value="MORN"/>
</dbReference>
<dbReference type="InterPro" id="IPR042814">
    <property type="entry name" value="Morn5"/>
</dbReference>
<dbReference type="PANTHER" id="PTHR46437">
    <property type="entry name" value="MORN REPEAT-CONTAINING PROTEIN 5"/>
    <property type="match status" value="1"/>
</dbReference>
<dbReference type="PANTHER" id="PTHR46437:SF1">
    <property type="entry name" value="MORN REPEAT-CONTAINING PROTEIN 5"/>
    <property type="match status" value="1"/>
</dbReference>
<dbReference type="Pfam" id="PF02493">
    <property type="entry name" value="MORN"/>
    <property type="match status" value="3"/>
</dbReference>
<dbReference type="SMART" id="SM00698">
    <property type="entry name" value="MORN"/>
    <property type="match status" value="2"/>
</dbReference>
<dbReference type="SUPFAM" id="SSF82185">
    <property type="entry name" value="Histone H3 K4-specific methyltransferase SET7/9 N-terminal domain"/>
    <property type="match status" value="1"/>
</dbReference>
<sequence length="170" mass="20078">MQYTGSQYFGEYINGRMEGSAEYILPTDTRYIGEMKDGMFHGEGTLFFPSGSRFDAIWKKGLVVKGKYTFNDGLQYEDKHWHYCDSYDRRFYTEICYGLKPSGISQLTNMDPPRRIPLGYYDCGDGFYNPTTRVIKDYRNRFLRNADDDEHEWIVRTCRKGWLPMPKQKS</sequence>
<evidence type="ECO:0000269" key="1">
    <source>
    </source>
</evidence>
<accession>Q9DAI9</accession>